<feature type="chain" id="PRO_0000041271" description="Capsid protein">
    <location>
        <begin position="1"/>
        <end position="275"/>
    </location>
</feature>
<feature type="chain" id="PRO_0000234322" description="Precursor of protein E3/E2">
    <location>
        <begin position="276"/>
        <end position="757"/>
    </location>
</feature>
<feature type="chain" id="PRO_0000041272" description="Assembly protein E3">
    <location>
        <begin position="276"/>
        <end position="334"/>
    </location>
</feature>
<feature type="chain" id="PRO_0000041273" description="Spike glycoprotein E2">
    <location>
        <begin position="335"/>
        <end position="757"/>
    </location>
</feature>
<feature type="chain" id="PRO_0000041274" description="6K protein">
    <location>
        <begin position="758"/>
        <end position="813"/>
    </location>
</feature>
<feature type="chain" id="PRO_0000041275" description="Spike glycoprotein E1">
    <location>
        <begin position="814"/>
        <end position="1255"/>
    </location>
</feature>
<feature type="topological domain" description="Extracellular" evidence="13">
    <location>
        <begin position="276"/>
        <end position="701"/>
    </location>
</feature>
<feature type="transmembrane region" description="Helical" evidence="13">
    <location>
        <begin position="702"/>
        <end position="722"/>
    </location>
</feature>
<feature type="topological domain" description="Cytoplasmic" evidence="13">
    <location>
        <begin position="723"/>
        <end position="757"/>
    </location>
</feature>
<feature type="topological domain" description="Extracellular" evidence="13">
    <location>
        <begin position="758"/>
        <end position="769"/>
    </location>
</feature>
<feature type="transmembrane region" description="Helical" evidence="13">
    <location>
        <begin position="770"/>
        <end position="790"/>
    </location>
</feature>
<feature type="topological domain" description="Cytoplasmic" evidence="13">
    <location>
        <position position="791"/>
    </location>
</feature>
<feature type="transmembrane region" description="Helical" evidence="13">
    <location>
        <begin position="792"/>
        <end position="812"/>
    </location>
</feature>
<feature type="topological domain" description="Extracellular" evidence="13">
    <location>
        <begin position="813"/>
        <end position="1225"/>
    </location>
</feature>
<feature type="transmembrane region" description="Helical" evidence="13">
    <location>
        <begin position="1226"/>
        <end position="1246"/>
    </location>
</feature>
<feature type="topological domain" description="Cytoplasmic" evidence="13">
    <location>
        <begin position="1247"/>
        <end position="1255"/>
    </location>
</feature>
<feature type="domain" description="Peptidase S3" evidence="14">
    <location>
        <begin position="126"/>
        <end position="275"/>
    </location>
</feature>
<feature type="region of interest" description="Necessary for nucleocapsid assembly and virus assembly" evidence="5">
    <location>
        <begin position="1"/>
        <end position="33"/>
    </location>
</feature>
<feature type="region of interest" description="Host transcription inhibition" evidence="5">
    <location>
        <begin position="33"/>
        <end position="68"/>
    </location>
</feature>
<feature type="region of interest" description="Disordered" evidence="15">
    <location>
        <begin position="44"/>
        <end position="119"/>
    </location>
</feature>
<feature type="region of interest" description="Binding to the viral RNA" evidence="7">
    <location>
        <begin position="91"/>
        <end position="127"/>
    </location>
</feature>
<feature type="region of interest" description="Ribosome-binding" evidence="7">
    <location>
        <begin position="112"/>
        <end position="126"/>
    </location>
</feature>
<feature type="region of interest" description="Interaction with spike glycoprotein E2" evidence="3">
    <location>
        <begin position="168"/>
        <end position="173"/>
    </location>
</feature>
<feature type="region of interest" description="Interaction with spike glycoprotein E2" evidence="3">
    <location>
        <begin position="260"/>
        <end position="264"/>
    </location>
</feature>
<feature type="region of interest" description="Functions as an uncleaved signal peptide for the precursor of protein E3/E2" evidence="2">
    <location>
        <begin position="276"/>
        <end position="287"/>
    </location>
</feature>
<feature type="region of interest" description="Interaction with the capsid protein" evidence="3">
    <location>
        <begin position="725"/>
        <end position="729"/>
    </location>
</feature>
<feature type="region of interest" description="Transient transmembrane before p62-6K protein processing" evidence="13">
    <location>
        <begin position="730"/>
        <end position="750"/>
    </location>
</feature>
<feature type="region of interest" description="E1 fusion peptide loop" evidence="12">
    <location>
        <begin position="897"/>
        <end position="914"/>
    </location>
</feature>
<feature type="short sequence motif" description="Supraphysiological nuclear export signal" evidence="5">
    <location>
        <begin position="41"/>
        <end position="48"/>
    </location>
</feature>
<feature type="short sequence motif" description="Nuclear localization signal" evidence="5">
    <location>
        <begin position="64"/>
        <end position="68"/>
    </location>
</feature>
<feature type="compositionally biased region" description="Basic residues" evidence="15">
    <location>
        <begin position="80"/>
        <end position="92"/>
    </location>
</feature>
<feature type="compositionally biased region" description="Basic residues" evidence="15">
    <location>
        <begin position="104"/>
        <end position="118"/>
    </location>
</feature>
<feature type="active site" description="Charge relay system" evidence="14">
    <location>
        <position position="152"/>
    </location>
</feature>
<feature type="active site" description="Charge relay system" evidence="14">
    <location>
        <position position="174"/>
    </location>
</feature>
<feature type="active site" description="Charge relay system" evidence="14">
    <location>
        <position position="226"/>
    </location>
</feature>
<feature type="site" description="Involved in dimerization of the capsid protein" evidence="11">
    <location>
        <position position="200"/>
    </location>
</feature>
<feature type="site" description="Involved in dimerization of the capsid protein" evidence="11">
    <location>
        <position position="233"/>
    </location>
</feature>
<feature type="site" description="Cleavage; by autolysis" evidence="2">
    <location>
        <begin position="275"/>
        <end position="276"/>
    </location>
</feature>
<feature type="site" description="Cleavage; by host furin" evidence="2">
    <location>
        <begin position="334"/>
        <end position="335"/>
    </location>
</feature>
<feature type="site" description="Cleavage; by host signal peptidase" evidence="2">
    <location>
        <begin position="757"/>
        <end position="758"/>
    </location>
</feature>
<feature type="site" description="Cleavage; by host signal peptidase" evidence="2">
    <location>
        <begin position="813"/>
        <end position="814"/>
    </location>
</feature>
<feature type="modified residue" description="Phosphothreonine" evidence="5">
    <location>
        <position position="93"/>
    </location>
</feature>
<feature type="modified residue" description="Phosphoserine" evidence="5">
    <location>
        <position position="124"/>
    </location>
</feature>
<feature type="modified residue" description="Phosphothreonine" evidence="5">
    <location>
        <position position="127"/>
    </location>
</feature>
<feature type="lipid moiety-binding region" description="S-palmitoyl cysteine; by host" evidence="3">
    <location>
        <position position="730"/>
    </location>
</feature>
<feature type="lipid moiety-binding region" description="S-palmitoyl cysteine; by host" evidence="10">
    <location>
        <position position="750"/>
    </location>
</feature>
<feature type="lipid moiety-binding region" description="S-palmitoyl cysteine; by host" evidence="10">
    <location>
        <position position="751"/>
    </location>
</feature>
<feature type="glycosylation site" description="N-linked (GlcNAc...) asparagine; by host" evidence="13">
    <location>
        <position position="286"/>
    </location>
</feature>
<feature type="glycosylation site" description="N-linked (GlcNAc...) asparagine; by host" evidence="13">
    <location>
        <position position="652"/>
    </location>
</feature>
<feature type="glycosylation site" description="N-linked (GlcNAc...) asparagine; by host" evidence="13">
    <location>
        <position position="947"/>
    </location>
</feature>
<feature type="glycosylation site" description="N-linked (GlcNAc...) asparagine; by host" evidence="10">
    <location>
        <position position="1083"/>
    </location>
</feature>
<feature type="disulfide bond" evidence="4">
    <location>
        <begin position="282"/>
        <end position="291"/>
    </location>
</feature>
<feature type="disulfide bond" evidence="6">
    <location>
        <begin position="353"/>
        <end position="457"/>
    </location>
</feature>
<feature type="disulfide bond" evidence="6">
    <location>
        <begin position="356"/>
        <end position="361"/>
    </location>
</feature>
<feature type="disulfide bond" evidence="6">
    <location>
        <begin position="424"/>
        <end position="438"/>
    </location>
</feature>
<feature type="disulfide bond" evidence="6">
    <location>
        <begin position="485"/>
        <end position="600"/>
    </location>
</feature>
<feature type="disulfide bond" evidence="6">
    <location>
        <begin position="534"/>
        <end position="560"/>
    </location>
</feature>
<feature type="disulfide bond" evidence="6">
    <location>
        <begin position="536"/>
        <end position="554"/>
    </location>
</feature>
<feature type="disulfide bond" evidence="9">
    <location>
        <begin position="730"/>
        <end position="751"/>
    </location>
</feature>
<feature type="disulfide bond" evidence="6">
    <location>
        <begin position="862"/>
        <end position="927"/>
    </location>
</feature>
<feature type="disulfide bond" evidence="6">
    <location>
        <begin position="875"/>
        <end position="907"/>
    </location>
</feature>
<feature type="disulfide bond" evidence="6">
    <location>
        <begin position="876"/>
        <end position="909"/>
    </location>
</feature>
<feature type="disulfide bond" evidence="6">
    <location>
        <begin position="881"/>
        <end position="891"/>
    </location>
</feature>
<feature type="disulfide bond" evidence="6">
    <location>
        <begin position="1072"/>
        <end position="1084"/>
    </location>
</feature>
<feature type="disulfide bond" evidence="6">
    <location>
        <begin position="1114"/>
        <end position="1189"/>
    </location>
</feature>
<feature type="disulfide bond" evidence="6">
    <location>
        <begin position="1119"/>
        <end position="1193"/>
    </location>
</feature>
<feature type="disulfide bond" evidence="1">
    <location>
        <begin position="1141"/>
        <end position="1183"/>
    </location>
</feature>
<sequence>MFPFQPMYPMQPMPYRNPFAAPRRPWFPRTDPFLAMQVQELTRSMANLTFKQRRDAPPEGPPAKKPKREAPQKQKGGGQGKKKKNQGKKKAKTGPPNPKAQSGNKKKPNKKPGKRQRMVMKLESDKTFPIMLEGKINGYACVVGGKLFRPMHVEGKIDNDVLAALKTKKASKYDLEYADVPQNMRADTFKYTHEKPQGYYSWHHGAVQYENGRFTVPKGVGAKGDSGRPILDNQGRVVAIVLGGVNEGSRTALSVVMWNEKGVTVKYTPENCEQWSLVTTMCLLANVTFPCAEPPICYDRKPAETLAMLSVNVDNPGYDELLEAAVKCPGRKRRSTEELFKEYKLTRPYMARCIRCAVGSCHSPIAIEAVKSDGHDGYVRLQTSSQYGLDSSGNLKGRTMRYDMHGTIEEIPLHQVSLHTSRPCHIVDGHGYFLLARCPAGDSITMEFKKGSVTHSCSVPYEVKFNPVGRELYTHPPEHGAEQACQVYAHDAQNRGAYVEMHLPGSEVDSSLISLSGSSVTVTPPVGTSALVKCKCGGTKISETINKAKQFSQCTKKEQCRAYRLQNDKWVYNSDKLPKAAGATLKGKLHVPFLLADGKCTVPLAPEPMITFGFRSVSLKLHPKNPTYLTTRQLADEPHYTHELISEPAVRNFTVTEKGWEFVWGNHPPKRFWAQETAPGNPHGLPHEVITHYYHRYPMSTILGLSICAAIVTVSVAASTWLFCKSRVSCLTPYRLTPNARMPLCLAVLCCARTARAETTWESLDHLWNNNQQMFWIQLLIPLAALIVVTRLLKCVCCVVPFLVVAGAAGAGAYEHATTMPSQAGISYNTIVNRAGYAPLPISITPTKIKLIPTVNLEYVTCHYKTGMDSPAIKCCGSQECTPTNRPDEQCKVFTGVYPFMWGGAYCFCDTENTQVSKAYVMKSDDCLADHAEAYKAHTASVQAFLNITVGEHSIVTTVYVNGETPVNFNGVKLTAGPLSTAWTPFDRKIVQYAGEIYNYDFPEYGAGQPGAFGDIQSRTVSSSDLYANTNLVLQRPKAGAIHVPYTQAPSGFEQWKKDKAPSLKFTAPFGCEIYTNPIRAENCAVGSIPLAFDIPDALFTRVSETPTLSAAECTLNECVYSSDFGGIATVKYSASKSGKCAVHVPSGTATLKEAAVELTEQGSATIHFSTANIHPEFRLQICTSYVTCKGDCHPPKDHIVTHPQYHAQTFTAAVSKTAWTWLTSLLGGSAVIIIIGLVLATIVAMYVLTNQKHN</sequence>
<accession>P36332</accession>
<protein>
    <recommendedName>
        <fullName>Structural polyprotein</fullName>
    </recommendedName>
    <alternativeName>
        <fullName>p130</fullName>
    </alternativeName>
    <component>
        <recommendedName>
            <fullName>Capsid protein</fullName>
            <ecNumber evidence="2">3.4.21.90</ecNumber>
        </recommendedName>
        <alternativeName>
            <fullName>Coat protein</fullName>
            <shortName>C</shortName>
        </alternativeName>
    </component>
    <component>
        <recommendedName>
            <fullName>Precursor of protein E3/E2</fullName>
        </recommendedName>
        <alternativeName>
            <fullName>p62</fullName>
        </alternativeName>
        <alternativeName>
            <fullName>pE2</fullName>
        </alternativeName>
    </component>
    <component>
        <recommendedName>
            <fullName>Assembly protein E3</fullName>
        </recommendedName>
    </component>
    <component>
        <recommendedName>
            <fullName>Spike glycoprotein E2</fullName>
        </recommendedName>
        <alternativeName>
            <fullName>E2 envelope glycoprotein</fullName>
        </alternativeName>
    </component>
    <component>
        <recommendedName>
            <fullName>6K protein</fullName>
        </recommendedName>
    </component>
    <component>
        <recommendedName>
            <fullName>Spike glycoprotein E1</fullName>
        </recommendedName>
        <alternativeName>
            <fullName>E1 envelope glycoprotein</fullName>
        </alternativeName>
    </component>
</protein>
<reference key="1">
    <citation type="journal article" date="1992" name="Virology">
        <title>Genetic evidence that epizootic Venezuelan equine encephalitis (VEE) viruses may have evolved from enzootic VEE subtype I-D virus.</title>
        <authorList>
            <person name="Kinney R.M."/>
            <person name="Tsuchiya K.R."/>
            <person name="Sneider J.M."/>
            <person name="Trent D.W."/>
        </authorList>
    </citation>
    <scope>NUCLEOTIDE SEQUENCE [GENOMIC RNA]</scope>
</reference>
<dbReference type="EC" id="3.4.21.90" evidence="2"/>
<dbReference type="EMBL" id="L04653">
    <property type="protein sequence ID" value="AAC19319.1"/>
    <property type="molecule type" value="Genomic_RNA"/>
</dbReference>
<dbReference type="PIR" id="B44213">
    <property type="entry name" value="B44213"/>
</dbReference>
<dbReference type="RefSeq" id="NP_040824.1">
    <property type="nucleotide sequence ID" value="NC_001449.1"/>
</dbReference>
<dbReference type="SMR" id="P36332"/>
<dbReference type="MEROPS" id="S03.001"/>
<dbReference type="GeneID" id="2652924"/>
<dbReference type="KEGG" id="vg:2652924"/>
<dbReference type="Proteomes" id="UP000008658">
    <property type="component" value="Segment"/>
</dbReference>
<dbReference type="GO" id="GO:0030430">
    <property type="term" value="C:host cell cytoplasm"/>
    <property type="evidence" value="ECO:0007669"/>
    <property type="project" value="UniProtKB-SubCell"/>
</dbReference>
<dbReference type="GO" id="GO:0042025">
    <property type="term" value="C:host cell nucleus"/>
    <property type="evidence" value="ECO:0007669"/>
    <property type="project" value="UniProtKB-SubCell"/>
</dbReference>
<dbReference type="GO" id="GO:0020002">
    <property type="term" value="C:host cell plasma membrane"/>
    <property type="evidence" value="ECO:0007669"/>
    <property type="project" value="UniProtKB-SubCell"/>
</dbReference>
<dbReference type="GO" id="GO:0016020">
    <property type="term" value="C:membrane"/>
    <property type="evidence" value="ECO:0007669"/>
    <property type="project" value="UniProtKB-KW"/>
</dbReference>
<dbReference type="GO" id="GO:0039619">
    <property type="term" value="C:T=4 icosahedral viral capsid"/>
    <property type="evidence" value="ECO:0007669"/>
    <property type="project" value="UniProtKB-KW"/>
</dbReference>
<dbReference type="GO" id="GO:0019031">
    <property type="term" value="C:viral envelope"/>
    <property type="evidence" value="ECO:0007669"/>
    <property type="project" value="UniProtKB-KW"/>
</dbReference>
<dbReference type="GO" id="GO:0055036">
    <property type="term" value="C:virion membrane"/>
    <property type="evidence" value="ECO:0007669"/>
    <property type="project" value="UniProtKB-SubCell"/>
</dbReference>
<dbReference type="GO" id="GO:0003723">
    <property type="term" value="F:RNA binding"/>
    <property type="evidence" value="ECO:0007669"/>
    <property type="project" value="UniProtKB-KW"/>
</dbReference>
<dbReference type="GO" id="GO:0004252">
    <property type="term" value="F:serine-type endopeptidase activity"/>
    <property type="evidence" value="ECO:0007669"/>
    <property type="project" value="InterPro"/>
</dbReference>
<dbReference type="GO" id="GO:0005198">
    <property type="term" value="F:structural molecule activity"/>
    <property type="evidence" value="ECO:0007669"/>
    <property type="project" value="InterPro"/>
</dbReference>
<dbReference type="GO" id="GO:0075512">
    <property type="term" value="P:clathrin-dependent endocytosis of virus by host cell"/>
    <property type="evidence" value="ECO:0007669"/>
    <property type="project" value="UniProtKB-KW"/>
</dbReference>
<dbReference type="GO" id="GO:0039654">
    <property type="term" value="P:fusion of virus membrane with host endosome membrane"/>
    <property type="evidence" value="ECO:0007669"/>
    <property type="project" value="UniProtKB-KW"/>
</dbReference>
<dbReference type="GO" id="GO:0006508">
    <property type="term" value="P:proteolysis"/>
    <property type="evidence" value="ECO:0007669"/>
    <property type="project" value="UniProtKB-KW"/>
</dbReference>
<dbReference type="GO" id="GO:0039657">
    <property type="term" value="P:symbiont-mediated suppression of host gene expression"/>
    <property type="evidence" value="ECO:0007669"/>
    <property type="project" value="UniProtKB-KW"/>
</dbReference>
<dbReference type="GO" id="GO:0039722">
    <property type="term" value="P:symbiont-mediated suppression of host toll-like receptor signaling pathway"/>
    <property type="evidence" value="ECO:0000250"/>
    <property type="project" value="UniProtKB"/>
</dbReference>
<dbReference type="GO" id="GO:0019062">
    <property type="term" value="P:virion attachment to host cell"/>
    <property type="evidence" value="ECO:0007669"/>
    <property type="project" value="UniProtKB-KW"/>
</dbReference>
<dbReference type="FunFam" id="1.10.287.2230:FF:000001">
    <property type="entry name" value="Structural polyprotein"/>
    <property type="match status" value="1"/>
</dbReference>
<dbReference type="FunFam" id="2.40.10.10:FF:000075">
    <property type="entry name" value="Structural polyprotein"/>
    <property type="match status" value="1"/>
</dbReference>
<dbReference type="FunFam" id="2.40.10.10:FF:000076">
    <property type="entry name" value="Structural polyprotein"/>
    <property type="match status" value="1"/>
</dbReference>
<dbReference type="FunFam" id="2.60.40.350:FF:000002">
    <property type="entry name" value="Structural polyprotein"/>
    <property type="match status" value="1"/>
</dbReference>
<dbReference type="FunFam" id="2.60.98.10:FF:000002">
    <property type="entry name" value="Structural polyprotein"/>
    <property type="match status" value="1"/>
</dbReference>
<dbReference type="FunFam" id="2.60.98.10:FF:000003">
    <property type="entry name" value="Structural polyprotein"/>
    <property type="match status" value="1"/>
</dbReference>
<dbReference type="Gene3D" id="1.10.287.2230">
    <property type="match status" value="1"/>
</dbReference>
<dbReference type="Gene3D" id="2.60.40.350">
    <property type="match status" value="1"/>
</dbReference>
<dbReference type="Gene3D" id="2.60.40.3200">
    <property type="entry name" value="Alphavirus E2 glycoprotein, A domain"/>
    <property type="match status" value="1"/>
</dbReference>
<dbReference type="Gene3D" id="2.60.40.4310">
    <property type="entry name" value="Alphavirus E2 glycoprotein, domain B"/>
    <property type="match status" value="1"/>
</dbReference>
<dbReference type="Gene3D" id="2.60.40.2400">
    <property type="entry name" value="Alphavirus E2 glycoprotein, domain C"/>
    <property type="match status" value="1"/>
</dbReference>
<dbReference type="Gene3D" id="2.60.98.10">
    <property type="entry name" value="Tick-borne Encephalitis virus Glycoprotein, domain 1"/>
    <property type="match status" value="3"/>
</dbReference>
<dbReference type="Gene3D" id="2.40.10.10">
    <property type="entry name" value="Trypsin-like serine proteases"/>
    <property type="match status" value="2"/>
</dbReference>
<dbReference type="InterPro" id="IPR002548">
    <property type="entry name" value="Alpha_E1_glycop"/>
</dbReference>
<dbReference type="InterPro" id="IPR000936">
    <property type="entry name" value="Alpha_E2_glycop"/>
</dbReference>
<dbReference type="InterPro" id="IPR002533">
    <property type="entry name" value="Alpha_E3_glycop"/>
</dbReference>
<dbReference type="InterPro" id="IPR042304">
    <property type="entry name" value="Alphavir_E2_A"/>
</dbReference>
<dbReference type="InterPro" id="IPR042305">
    <property type="entry name" value="Alphavir_E2_B"/>
</dbReference>
<dbReference type="InterPro" id="IPR042306">
    <property type="entry name" value="Alphavir_E2_C"/>
</dbReference>
<dbReference type="InterPro" id="IPR000336">
    <property type="entry name" value="Flavivir/Alphavir_Ig-like_sf"/>
</dbReference>
<dbReference type="InterPro" id="IPR036253">
    <property type="entry name" value="Glycoprot_cen/dimer_sf"/>
</dbReference>
<dbReference type="InterPro" id="IPR038055">
    <property type="entry name" value="Glycoprot_E_dimer_dom"/>
</dbReference>
<dbReference type="InterPro" id="IPR014756">
    <property type="entry name" value="Ig_E-set"/>
</dbReference>
<dbReference type="InterPro" id="IPR009003">
    <property type="entry name" value="Peptidase_S1_PA"/>
</dbReference>
<dbReference type="InterPro" id="IPR043504">
    <property type="entry name" value="Peptidase_S1_PA_chymotrypsin"/>
</dbReference>
<dbReference type="InterPro" id="IPR000930">
    <property type="entry name" value="Peptidase_S3"/>
</dbReference>
<dbReference type="Pfam" id="PF01589">
    <property type="entry name" value="Alpha_E1_glycop"/>
    <property type="match status" value="1"/>
</dbReference>
<dbReference type="Pfam" id="PF00943">
    <property type="entry name" value="Alpha_E2_glycop"/>
    <property type="match status" value="1"/>
</dbReference>
<dbReference type="Pfam" id="PF01563">
    <property type="entry name" value="Alpha_E3_glycop"/>
    <property type="match status" value="1"/>
</dbReference>
<dbReference type="Pfam" id="PF00944">
    <property type="entry name" value="Peptidase_S3"/>
    <property type="match status" value="1"/>
</dbReference>
<dbReference type="PRINTS" id="PR00798">
    <property type="entry name" value="TOGAVIRIN"/>
</dbReference>
<dbReference type="SUPFAM" id="SSF81296">
    <property type="entry name" value="E set domains"/>
    <property type="match status" value="1"/>
</dbReference>
<dbReference type="SUPFAM" id="SSF50494">
    <property type="entry name" value="Trypsin-like serine proteases"/>
    <property type="match status" value="1"/>
</dbReference>
<dbReference type="SUPFAM" id="SSF56983">
    <property type="entry name" value="Viral glycoprotein, central and dimerisation domains"/>
    <property type="match status" value="1"/>
</dbReference>
<dbReference type="PROSITE" id="PS51690">
    <property type="entry name" value="ALPHAVIRUS_CP"/>
    <property type="match status" value="1"/>
</dbReference>
<keyword id="KW-0167">Capsid protein</keyword>
<keyword id="KW-1165">Clathrin-mediated endocytosis of virus by host</keyword>
<keyword id="KW-0165">Cleavage on pair of basic residues</keyword>
<keyword id="KW-1015">Disulfide bond</keyword>
<keyword id="KW-1262">Eukaryotic host gene expression shutoff by virus</keyword>
<keyword id="KW-1191">Eukaryotic host transcription shutoff by virus</keyword>
<keyword id="KW-1170">Fusion of virus membrane with host endosomal membrane</keyword>
<keyword id="KW-1168">Fusion of virus membrane with host membrane</keyword>
<keyword id="KW-0325">Glycoprotein</keyword>
<keyword id="KW-1032">Host cell membrane</keyword>
<keyword id="KW-1035">Host cytoplasm</keyword>
<keyword id="KW-1038">Host endoplasmic reticulum</keyword>
<keyword id="KW-1190">Host gene expression shutoff by virus</keyword>
<keyword id="KW-1040">Host Golgi apparatus</keyword>
<keyword id="KW-1043">Host membrane</keyword>
<keyword id="KW-1048">Host nucleus</keyword>
<keyword id="KW-0945">Host-virus interaction</keyword>
<keyword id="KW-0378">Hydrolase</keyword>
<keyword id="KW-0407">Ion channel</keyword>
<keyword id="KW-0406">Ion transport</keyword>
<keyword id="KW-0449">Lipoprotein</keyword>
<keyword id="KW-0472">Membrane</keyword>
<keyword id="KW-0564">Palmitate</keyword>
<keyword id="KW-0597">Phosphoprotein</keyword>
<keyword id="KW-0645">Protease</keyword>
<keyword id="KW-0694">RNA-binding</keyword>
<keyword id="KW-0720">Serine protease</keyword>
<keyword id="KW-1144">T=4 icosahedral capsid protein</keyword>
<keyword id="KW-0812">Transmembrane</keyword>
<keyword id="KW-1133">Transmembrane helix</keyword>
<keyword id="KW-0813">Transport</keyword>
<keyword id="KW-1161">Viral attachment to host cell</keyword>
<keyword id="KW-1234">Viral attachment to host entry receptor</keyword>
<keyword id="KW-0261">Viral envelope protein</keyword>
<keyword id="KW-1182">Viral ion channel</keyword>
<keyword id="KW-1162">Viral penetration into host cytoplasm</keyword>
<keyword id="KW-0946">Virion</keyword>
<keyword id="KW-1164">Virus endocytosis by host</keyword>
<keyword id="KW-1160">Virus entry into host cell</keyword>
<proteinExistence type="inferred from homology"/>
<name>POLS_EEVVP</name>
<organism>
    <name type="scientific">Venezuelan equine encephalitis virus (strain P676)</name>
    <name type="common">VEEV</name>
    <dbReference type="NCBI Taxonomy" id="36385"/>
    <lineage>
        <taxon>Viruses</taxon>
        <taxon>Riboviria</taxon>
        <taxon>Orthornavirae</taxon>
        <taxon>Kitrinoviricota</taxon>
        <taxon>Alsuviricetes</taxon>
        <taxon>Martellivirales</taxon>
        <taxon>Togaviridae</taxon>
        <taxon>Alphavirus</taxon>
        <taxon>Venezuelan equine encephalitis virus</taxon>
    </lineage>
</organism>
<evidence type="ECO:0000250" key="1"/>
<evidence type="ECO:0000250" key="2">
    <source>
        <dbReference type="UniProtKB" id="P03315"/>
    </source>
</evidence>
<evidence type="ECO:0000250" key="3">
    <source>
        <dbReference type="UniProtKB" id="P03316"/>
    </source>
</evidence>
<evidence type="ECO:0000250" key="4">
    <source>
        <dbReference type="UniProtKB" id="P08768"/>
    </source>
</evidence>
<evidence type="ECO:0000250" key="5">
    <source>
        <dbReference type="UniProtKB" id="P09592"/>
    </source>
</evidence>
<evidence type="ECO:0000250" key="6">
    <source>
        <dbReference type="UniProtKB" id="P13897"/>
    </source>
</evidence>
<evidence type="ECO:0000250" key="7">
    <source>
        <dbReference type="UniProtKB" id="P27284"/>
    </source>
</evidence>
<evidence type="ECO:0000250" key="8">
    <source>
        <dbReference type="UniProtKB" id="P36329"/>
    </source>
</evidence>
<evidence type="ECO:0000250" key="9">
    <source>
        <dbReference type="UniProtKB" id="Q5XXP3"/>
    </source>
</evidence>
<evidence type="ECO:0000250" key="10">
    <source>
        <dbReference type="UniProtKB" id="Q5Y388"/>
    </source>
</evidence>
<evidence type="ECO:0000250" key="11">
    <source>
        <dbReference type="UniProtKB" id="Q86925"/>
    </source>
</evidence>
<evidence type="ECO:0000250" key="12">
    <source>
        <dbReference type="UniProtKB" id="Q8JUX5"/>
    </source>
</evidence>
<evidence type="ECO:0000255" key="13"/>
<evidence type="ECO:0000255" key="14">
    <source>
        <dbReference type="PROSITE-ProRule" id="PRU01027"/>
    </source>
</evidence>
<evidence type="ECO:0000256" key="15">
    <source>
        <dbReference type="SAM" id="MobiDB-lite"/>
    </source>
</evidence>
<evidence type="ECO:0000305" key="16"/>
<comment type="function">
    <molecule>Capsid protein</molecule>
    <text evidence="2 3 5 7 8">Forms an icosahedral capsid with a T=4 symmetry composed of 240 copies of the capsid protein surrounded by a lipid membrane through which penetrate 80 spikes composed of trimers of E1-E2 heterodimers (By similarity). The capsid protein binds to the viral RNA genome at a site adjacent to a ribosome binding site for viral genome translation following genome release (By similarity). Possesses a protease activity that results in its autocatalytic cleavage from the nascent structural protein (By similarity). Following its self-cleavage, the capsid protein transiently associates with ribosomes, and within several minutes the protein binds to viral RNA and rapidly assembles into icosahedric core particles (By similarity). The resulting nucleocapsid eventually associates with the cytoplasmic domain of the spike glycoprotein E2 at the cell membrane, leading to budding and formation of mature virions (By similarity). In case of infection, new virions attach to target cells and after clathrin-mediated endocytosis their membrane fuses with the host endosomal membrane (By similarity). This leads to the release of the nucleocapsid into the cytoplasm, followed by an uncoating event necessary for the genomic RNA to become accessible (By similarity). The uncoating might be triggered by the interaction of capsid proteins with ribosomes (By similarity). Binding of ribosomes would release the genomic RNA since the same region is genomic RNA-binding and ribosome-binding (By similarity). Specifically inhibits interleukin-1 receptor-associated kinase 1/IRAK1-dependent signaling during viral entry, representing a means by which the alphaviruses may evade innate immune detection and activation prior to viral gene expression (By similarity). Inhibits host transcription (By similarity). Forms a tetrameric complex with XPO1/CRM1 and the nuclear import receptor importin (By similarity). This complex blocks the central channel of host nuclear pores thereby inhibiting the receptor-mediated nuclear transport and thus the host mRNA and rRNA transcription (By similarity). The inhibition of transcription is linked to a cytopathic effect on the host cell (By similarity).</text>
</comment>
<comment type="function">
    <molecule>Assembly protein E3</molecule>
    <text evidence="2">Provides the signal sequence for the translocation of the precursor of protein E3/E2 to the host endoplasmic reticulum. Furin-cleaved E3 remains associated with spike glycoprotein E1 and mediates pH protection of the latter during the transport via the secretory pathway. After virion release from the host cell, the assembly protein E3 is gradually released in the extracellular space.</text>
</comment>
<comment type="function">
    <molecule>Spike glycoprotein E2</molecule>
    <text evidence="2 5">Plays a role in viral attachment to target host cell, by binding to the cell receptor LDLRAD3 (By similarity). Synthesized as a p62 precursor which is processed by furin at the cell membrane just before virion budding, giving rise to E2-E1 heterodimer. The p62-E1 heterodimer is stable, whereas E2-E1 is unstable and dissociate at low pH. p62 is processed at the last step, presumably to avoid E1 fusion activation before its final export to cell surface. E2 C-terminus contains a transitory transmembrane that would be disrupted by palmitoylation, resulting in reorientation of the C-terminal tail from lumenal to cytoplasmic side. This step is critical since E2 C-terminus is involved in budding by interacting with capsid proteins. This release of E2 C-terminus in cytoplasm occurs lately in protein export, and precludes premature assembly of particles at the endoplasmic reticulum membrane.</text>
</comment>
<comment type="function">
    <molecule>6K protein</molecule>
    <text evidence="2 3">Acts as a viroporin that participates in virus glycoprotein processing and transport to the plasma membrane, cell permeabilization and budding of viral particles (By similarity). Disrupts the calcium homeostasis of the cell, probably at the endoplasmic reticulum level (By similarity). This leads to cytoplasmic calcium elevation (By similarity). Because of its lipophilic properties, the 6K protein is postulated to influence the selection of lipids that interact with the transmembrane domains of the glycoproteins, which, in turn, affects the deformability of the bilayer required for the extreme curvature that occurs as budding proceeds. Present in low amount in virions, about 3% compared to viral glycoproteins (By similarity).</text>
</comment>
<comment type="function">
    <molecule>Spike glycoprotein E1</molecule>
    <text evidence="3 5">Class II viral fusion protein. Fusion activity is inactive as long as E1 is bound to E2 in mature virion. After virus attachment to cell receptor LDLRAD3 and endocytosis, acidification of the endosome induce dissociation of E1/E2 heterodimer and concomitant trimerization of the E1 subunits (By similarity). This E1 trimer is fusion active, and promotes release of viral nucleocapsid in cytoplasm after endosome and viral membrane fusion. Efficient fusion requires the presence of cholesterol and sphingolipid in the target membrane (By similarity).</text>
</comment>
<comment type="catalytic activity">
    <reaction evidence="3">
        <text>Autocatalytic release of the core protein from the N-terminus of the togavirus structural polyprotein by hydrolysis of a -Trp-|-Ser- bond.</text>
        <dbReference type="EC" id="3.4.21.90"/>
    </reaction>
</comment>
<comment type="subunit">
    <molecule>Capsid protein</molecule>
    <text evidence="3 5 11 12">Homodimer (By similarity). Homomultimer (By similarity). Interacts with host karyopherin KPNA4; this interaction allows the nuclear import of the viral capsid protein (By similarity). Interacts with spike glycoprotein E2 (By similarity). Interacts with host IRAK1; the interaction leads to inhibition of IRAK1-dependent signaling (By similarity). Part of a tetrameric complex composed of host CRM1, host importin alpha/beta dimer and the viral capsid; this complex blocks the receptor-mediated transport through the nuclear pore (By similarity). Interacts with host phosphatase PPP1CA; this interaction dephosphorylates the capsid protein, which increases its ability to bind to the viral genome (By similarity).</text>
</comment>
<comment type="subunit">
    <molecule>Precursor of protein E3/E2</molecule>
    <text evidence="2 3 5">The precursor of protein E3/E2 and E1 form a heterodimer shortly after synthesis (By similarity).</text>
</comment>
<comment type="subunit">
    <molecule>Spike glycoprotein E1</molecule>
    <text evidence="3 5 12">Interacts with spike glycoprotein E2 (By similarity). The precursor of protein E3/E2 and E1 form a heterodimer shortly after synthesis (By similarity). Processing of the precursor of protein E3/E2 into E2 and E3 results in a heterodimer of the spike glycoproteins E2 and E1 (By similarity). Spike at virion surface are constituted of three E2-E1 heterodimers (By similarity). After target cell attachment and endocytosis, E1 change conformation to form homotrimers (By similarity). Interacts with 6K protein (By similarity). Interacts with host LDLRAD3; this interaction mediates viral entry to the host cell (By similarity).</text>
</comment>
<comment type="subunit">
    <molecule>Spike glycoprotein E2</molecule>
    <text evidence="3 5">Interacts with spike glycoprotein E1 (By similarity). Processing of the precursor of protein E3/E2 into E2 and E3 results in a heterodimer of the spike glycoproteins E2 and E1 (By similarity). Spike at virion surface are constituted of a trimer of E2-E1 heterodimers (By similarity). Interacts with 6K protein (By similarity). Interacts with host LDLRAD3; this interaction mediates viral entry to the host cell (By similarity).</text>
</comment>
<comment type="subunit">
    <molecule>6K protein</molecule>
    <text evidence="3 9">Oligomer (By similarity). Interacts with spike glycoprotein E1. Interacts with spike glycoprotein E2 (By similarity).</text>
</comment>
<comment type="subcellular location">
    <molecule>Capsid protein</molecule>
    <subcellularLocation>
        <location evidence="3">Virion</location>
    </subcellularLocation>
    <subcellularLocation>
        <location evidence="5">Host cytoplasm</location>
    </subcellularLocation>
    <subcellularLocation>
        <location evidence="3">Host cell membrane</location>
    </subcellularLocation>
    <subcellularLocation>
        <location evidence="5">Host nucleus</location>
    </subcellularLocation>
</comment>
<comment type="subcellular location">
    <molecule>Spike glycoprotein E2</molecule>
    <subcellularLocation>
        <location evidence="12">Virion membrane</location>
        <topology evidence="13">Single-pass type I membrane protein</topology>
    </subcellularLocation>
    <subcellularLocation>
        <location evidence="3">Host cell membrane</location>
        <topology evidence="12">Single-pass type I membrane protein</topology>
    </subcellularLocation>
</comment>
<comment type="subcellular location">
    <molecule>6K protein</molecule>
    <subcellularLocation>
        <location evidence="3">Host cell membrane</location>
        <topology evidence="13">Multi-pass membrane protein</topology>
    </subcellularLocation>
    <subcellularLocation>
        <location evidence="3">Virion membrane</location>
        <topology evidence="13">Multi-pass membrane protein</topology>
    </subcellularLocation>
    <subcellularLocation>
        <location evidence="3">Host Golgi apparatus</location>
    </subcellularLocation>
    <subcellularLocation>
        <location>Host Golgi apparatus</location>
        <location>Host trans-Golgi network</location>
    </subcellularLocation>
    <subcellularLocation>
        <location evidence="3">Host endoplasmic reticulum</location>
    </subcellularLocation>
</comment>
<comment type="subcellular location">
    <molecule>Spike glycoprotein E1</molecule>
    <subcellularLocation>
        <location evidence="12">Virion membrane</location>
        <topology evidence="13">Single-pass type I membrane protein</topology>
    </subcellularLocation>
    <subcellularLocation>
        <location evidence="3 12">Host cell membrane</location>
        <topology evidence="13">Single-pass type I membrane protein</topology>
    </subcellularLocation>
</comment>
<comment type="domain">
    <text evidence="2">Structural polyprotein: As soon as the capsid protein has been autocleaved, an internal uncleaved signal peptide directs the remaining polyprotein to the endoplasmic reticulum.</text>
</comment>
<comment type="domain">
    <molecule>Capsid protein</molecule>
    <text evidence="3 5">The very N-terminus plays a role in the particle assembly process (By similarity). The N-terminus also contains a nuclear localization signal and a supraphysiological nuclear export signal (supraNES), which is an unusually strong NES that mediates host CRM1 binding in the absence of RanGTP and thus can bind CRM1, not only in the nucleus, but also in the cytoplasm (By similarity). The C-terminus functions as a protease during translation to cleave itself from the translating structural polyprotein (By similarity).</text>
</comment>
<comment type="PTM">
    <text evidence="2">Structural polyprotein: Specific enzymatic cleavages in vivo yield mature proteins. Capsid protein is auto-cleaved during polyprotein translation, unmasking a signal peptide at the N-terminus of the precursor of E3/E2. The remaining polyprotein is then targeted to the host endoplasmic reticulum, where host signal peptidase cleaves it into pE2, 6K and E1 proteins. pE2 is further processed to mature E3 and E2 by host furin in trans-Golgi vesicle.</text>
</comment>
<comment type="PTM">
    <molecule>Capsid protein</molecule>
    <text evidence="5">Phosphorylated on serine and threonine residues.</text>
</comment>
<comment type="PTM">
    <molecule>Spike glycoprotein E2</molecule>
    <text evidence="2">Palmitoylated via thioester bonds. These palmitoylations may induce disruption of the C-terminus transmembrane. This would result in the reorientation of E2 C-terminus from lumenal to cytoplasmic side.</text>
</comment>
<comment type="PTM">
    <molecule>Spike glycoprotein E1</molecule>
    <text evidence="2">N-glycosylated.</text>
</comment>
<comment type="PTM">
    <molecule>Spike glycoprotein E2</molecule>
    <text evidence="2">N-glycosylated.</text>
</comment>
<comment type="PTM">
    <molecule>Assembly protein E3</molecule>
    <text evidence="2">N-glycosylated.</text>
</comment>
<comment type="PTM">
    <molecule>6K protein</molecule>
    <text evidence="2">Palmitoylated via thioester bonds.</text>
</comment>
<comment type="miscellaneous">
    <text evidence="16">Belongs to the New World alphaviruses that can cause fatal encephalitis.</text>
</comment>
<comment type="miscellaneous">
    <text evidence="11">Structural polyprotein: Translated from a subgenomic RNA synthesized during togavirus replication.</text>
</comment>
<organismHost>
    <name type="scientific">Bos taurus</name>
    <name type="common">Bovine</name>
    <dbReference type="NCBI Taxonomy" id="9913"/>
</organismHost>
<organismHost>
    <name type="scientific">Didelphis marsupialis</name>
    <name type="common">Southern opossum</name>
    <dbReference type="NCBI Taxonomy" id="9268"/>
</organismHost>
<organismHost>
    <name type="scientific">Equus asinus</name>
    <name type="common">Donkey</name>
    <name type="synonym">Equus africanus asinus</name>
    <dbReference type="NCBI Taxonomy" id="9793"/>
</organismHost>
<organismHost>
    <name type="scientific">Equus caballus</name>
    <name type="common">Horse</name>
    <dbReference type="NCBI Taxonomy" id="9796"/>
</organismHost>
<organismHost>
    <name type="scientific">Homo sapiens</name>
    <name type="common">Human</name>
    <dbReference type="NCBI Taxonomy" id="9606"/>
</organismHost>
<organismHost>
    <name type="scientific">Melanoconion</name>
    <dbReference type="NCBI Taxonomy" id="53535"/>
</organismHost>
<organismHost>
    <name type="scientific">Philander opossum</name>
    <name type="common">Gray four-eyed opossum</name>
    <dbReference type="NCBI Taxonomy" id="9272"/>
</organismHost>
<organismHost>
    <name type="scientific">Proechimys</name>
    <dbReference type="NCBI Taxonomy" id="10162"/>
</organismHost>
<organismHost>
    <name type="scientific">Sigmodon hispidus</name>
    <name type="common">Hispid cotton rat</name>
    <dbReference type="NCBI Taxonomy" id="42415"/>
</organismHost>